<organism>
    <name type="scientific">Baumannia cicadellinicola subsp. Homalodisca coagulata</name>
    <dbReference type="NCBI Taxonomy" id="374463"/>
    <lineage>
        <taxon>Bacteria</taxon>
        <taxon>Pseudomonadati</taxon>
        <taxon>Pseudomonadota</taxon>
        <taxon>Gammaproteobacteria</taxon>
        <taxon>Candidatus Palibaumannia</taxon>
    </lineage>
</organism>
<keyword id="KW-0031">Aminopeptidase</keyword>
<keyword id="KW-0963">Cytoplasm</keyword>
<keyword id="KW-0378">Hydrolase</keyword>
<keyword id="KW-0464">Manganese</keyword>
<keyword id="KW-0479">Metal-binding</keyword>
<keyword id="KW-0645">Protease</keyword>
<keyword id="KW-1185">Reference proteome</keyword>
<comment type="function">
    <text evidence="1">Presumably involved in the processing and regular turnover of intracellular proteins. Catalyzes the removal of unsubstituted N-terminal amino acids from various peptides.</text>
</comment>
<comment type="catalytic activity">
    <reaction evidence="1">
        <text>Release of an N-terminal amino acid, Xaa-|-Yaa-, in which Xaa is preferably Leu, but may be other amino acids including Pro although not Arg or Lys, and Yaa may be Pro. Amino acid amides and methyl esters are also readily hydrolyzed, but rates on arylamides are exceedingly low.</text>
        <dbReference type="EC" id="3.4.11.1"/>
    </reaction>
</comment>
<comment type="catalytic activity">
    <reaction evidence="1">
        <text>Release of an N-terminal amino acid, preferentially leucine, but not glutamic or aspartic acids.</text>
        <dbReference type="EC" id="3.4.11.10"/>
    </reaction>
</comment>
<comment type="cofactor">
    <cofactor evidence="1">
        <name>Mn(2+)</name>
        <dbReference type="ChEBI" id="CHEBI:29035"/>
    </cofactor>
    <text evidence="1">Binds 2 manganese ions per subunit.</text>
</comment>
<comment type="subcellular location">
    <subcellularLocation>
        <location evidence="1">Cytoplasm</location>
    </subcellularLocation>
</comment>
<comment type="similarity">
    <text evidence="1">Belongs to the peptidase M17 family.</text>
</comment>
<accession>Q1LTH8</accession>
<name>AMPA_BAUCH</name>
<sequence>MDFRVKSGRLEKQRSACIVAGVFESRQFSFIAEQLDKISKGYISALLRSGELEGQVGQVLLLYHVPYIMSKRVLLIGCGKKRELDERKYKKIIINTVNALNNTGSIEAMCFLTELQVQGKNTYWKIRQAVEIAHNLCYTFDKFKKTKKISYQLRRITFNITNRRELTSSKCALQHGIAIAAGIKAAKDLANMPPNICNSAYLASKAHELANSNKHINASVLGKQQMKELGMNAYLAVGQGSANESLMSIIEYQGHLDSKARPIVLVGKGLTFDSGGISIKPSNKMNEMKYDMCGAATVYGVMRVVLSLNLPLNIIGVLAGCENMVDSCSFRPGDVLTTLSGQTVEVLNTDAEGRLVLCDTLTYIERFNPEIVIDIATLTGACVIALGHHFTGMMSNHNPLSNELSSAAEQAGDYIWPLPLSNEFHEELDSHCADMTNVGGSAGGAITAGCFLSRFTSKYHWAHLDIAGTAWNTEKHQGATGRPVAMLSQFLINRSISDNK</sequence>
<proteinExistence type="inferred from homology"/>
<dbReference type="EC" id="3.4.11.1" evidence="1"/>
<dbReference type="EC" id="3.4.11.10" evidence="1"/>
<dbReference type="EMBL" id="CP000238">
    <property type="protein sequence ID" value="ABF14325.1"/>
    <property type="molecule type" value="Genomic_DNA"/>
</dbReference>
<dbReference type="RefSeq" id="WP_011520469.1">
    <property type="nucleotide sequence ID" value="NC_007984.1"/>
</dbReference>
<dbReference type="SMR" id="Q1LTH8"/>
<dbReference type="STRING" id="374463.BCI_0287"/>
<dbReference type="MEROPS" id="M17.003"/>
<dbReference type="KEGG" id="bci:BCI_0287"/>
<dbReference type="HOGENOM" id="CLU_013734_2_2_6"/>
<dbReference type="OrthoDB" id="9809354at2"/>
<dbReference type="Proteomes" id="UP000002427">
    <property type="component" value="Chromosome"/>
</dbReference>
<dbReference type="GO" id="GO:0005737">
    <property type="term" value="C:cytoplasm"/>
    <property type="evidence" value="ECO:0007669"/>
    <property type="project" value="UniProtKB-SubCell"/>
</dbReference>
<dbReference type="GO" id="GO:0030145">
    <property type="term" value="F:manganese ion binding"/>
    <property type="evidence" value="ECO:0007669"/>
    <property type="project" value="UniProtKB-UniRule"/>
</dbReference>
<dbReference type="GO" id="GO:0070006">
    <property type="term" value="F:metalloaminopeptidase activity"/>
    <property type="evidence" value="ECO:0007669"/>
    <property type="project" value="InterPro"/>
</dbReference>
<dbReference type="GO" id="GO:0006508">
    <property type="term" value="P:proteolysis"/>
    <property type="evidence" value="ECO:0007669"/>
    <property type="project" value="UniProtKB-KW"/>
</dbReference>
<dbReference type="CDD" id="cd00433">
    <property type="entry name" value="Peptidase_M17"/>
    <property type="match status" value="1"/>
</dbReference>
<dbReference type="FunFam" id="3.40.630.10:FF:000004">
    <property type="entry name" value="Probable cytosol aminopeptidase"/>
    <property type="match status" value="1"/>
</dbReference>
<dbReference type="Gene3D" id="3.40.220.10">
    <property type="entry name" value="Leucine Aminopeptidase, subunit E, domain 1"/>
    <property type="match status" value="1"/>
</dbReference>
<dbReference type="Gene3D" id="3.40.630.10">
    <property type="entry name" value="Zn peptidases"/>
    <property type="match status" value="1"/>
</dbReference>
<dbReference type="HAMAP" id="MF_00181">
    <property type="entry name" value="Cytosol_peptidase_M17"/>
    <property type="match status" value="1"/>
</dbReference>
<dbReference type="InterPro" id="IPR011356">
    <property type="entry name" value="Leucine_aapep/pepB"/>
</dbReference>
<dbReference type="InterPro" id="IPR043472">
    <property type="entry name" value="Macro_dom-like"/>
</dbReference>
<dbReference type="InterPro" id="IPR000819">
    <property type="entry name" value="Peptidase_M17_C"/>
</dbReference>
<dbReference type="InterPro" id="IPR023042">
    <property type="entry name" value="Peptidase_M17_leu_NH2_pept"/>
</dbReference>
<dbReference type="InterPro" id="IPR008283">
    <property type="entry name" value="Peptidase_M17_N"/>
</dbReference>
<dbReference type="NCBIfam" id="NF002072">
    <property type="entry name" value="PRK00913.1-1"/>
    <property type="match status" value="1"/>
</dbReference>
<dbReference type="NCBIfam" id="NF002074">
    <property type="entry name" value="PRK00913.1-4"/>
    <property type="match status" value="1"/>
</dbReference>
<dbReference type="PANTHER" id="PTHR11963:SF23">
    <property type="entry name" value="CYTOSOL AMINOPEPTIDASE"/>
    <property type="match status" value="1"/>
</dbReference>
<dbReference type="PANTHER" id="PTHR11963">
    <property type="entry name" value="LEUCINE AMINOPEPTIDASE-RELATED"/>
    <property type="match status" value="1"/>
</dbReference>
<dbReference type="Pfam" id="PF00883">
    <property type="entry name" value="Peptidase_M17"/>
    <property type="match status" value="1"/>
</dbReference>
<dbReference type="Pfam" id="PF02789">
    <property type="entry name" value="Peptidase_M17_N"/>
    <property type="match status" value="1"/>
</dbReference>
<dbReference type="PRINTS" id="PR00481">
    <property type="entry name" value="LAMNOPPTDASE"/>
</dbReference>
<dbReference type="SUPFAM" id="SSF52949">
    <property type="entry name" value="Macro domain-like"/>
    <property type="match status" value="1"/>
</dbReference>
<dbReference type="SUPFAM" id="SSF53187">
    <property type="entry name" value="Zn-dependent exopeptidases"/>
    <property type="match status" value="1"/>
</dbReference>
<dbReference type="PROSITE" id="PS00631">
    <property type="entry name" value="CYTOSOL_AP"/>
    <property type="match status" value="1"/>
</dbReference>
<gene>
    <name evidence="1" type="primary">pepA</name>
    <name type="ordered locus">BCI_0287</name>
</gene>
<protein>
    <recommendedName>
        <fullName evidence="1">Probable cytosol aminopeptidase</fullName>
        <ecNumber evidence="1">3.4.11.1</ecNumber>
    </recommendedName>
    <alternativeName>
        <fullName evidence="1">Leucine aminopeptidase</fullName>
        <shortName evidence="1">LAP</shortName>
        <ecNumber evidence="1">3.4.11.10</ecNumber>
    </alternativeName>
    <alternativeName>
        <fullName evidence="1">Leucyl aminopeptidase</fullName>
    </alternativeName>
</protein>
<feature type="chain" id="PRO_1000019885" description="Probable cytosol aminopeptidase">
    <location>
        <begin position="1"/>
        <end position="500"/>
    </location>
</feature>
<feature type="active site" evidence="1">
    <location>
        <position position="280"/>
    </location>
</feature>
<feature type="active site" evidence="1">
    <location>
        <position position="354"/>
    </location>
</feature>
<feature type="binding site" evidence="1">
    <location>
        <position position="268"/>
    </location>
    <ligand>
        <name>Mn(2+)</name>
        <dbReference type="ChEBI" id="CHEBI:29035"/>
        <label>2</label>
    </ligand>
</feature>
<feature type="binding site" evidence="1">
    <location>
        <position position="273"/>
    </location>
    <ligand>
        <name>Mn(2+)</name>
        <dbReference type="ChEBI" id="CHEBI:29035"/>
        <label>1</label>
    </ligand>
</feature>
<feature type="binding site" evidence="1">
    <location>
        <position position="273"/>
    </location>
    <ligand>
        <name>Mn(2+)</name>
        <dbReference type="ChEBI" id="CHEBI:29035"/>
        <label>2</label>
    </ligand>
</feature>
<feature type="binding site" evidence="1">
    <location>
        <position position="291"/>
    </location>
    <ligand>
        <name>Mn(2+)</name>
        <dbReference type="ChEBI" id="CHEBI:29035"/>
        <label>2</label>
    </ligand>
</feature>
<feature type="binding site" evidence="1">
    <location>
        <position position="350"/>
    </location>
    <ligand>
        <name>Mn(2+)</name>
        <dbReference type="ChEBI" id="CHEBI:29035"/>
        <label>1</label>
    </ligand>
</feature>
<feature type="binding site" evidence="1">
    <location>
        <position position="352"/>
    </location>
    <ligand>
        <name>Mn(2+)</name>
        <dbReference type="ChEBI" id="CHEBI:29035"/>
        <label>1</label>
    </ligand>
</feature>
<feature type="binding site" evidence="1">
    <location>
        <position position="352"/>
    </location>
    <ligand>
        <name>Mn(2+)</name>
        <dbReference type="ChEBI" id="CHEBI:29035"/>
        <label>2</label>
    </ligand>
</feature>
<evidence type="ECO:0000255" key="1">
    <source>
        <dbReference type="HAMAP-Rule" id="MF_00181"/>
    </source>
</evidence>
<reference key="1">
    <citation type="journal article" date="2006" name="PLoS Biol.">
        <title>Metabolic complementarity and genomics of the dual bacterial symbiosis of sharpshooters.</title>
        <authorList>
            <person name="Wu D."/>
            <person name="Daugherty S.C."/>
            <person name="Van Aken S.E."/>
            <person name="Pai G.H."/>
            <person name="Watkins K.L."/>
            <person name="Khouri H."/>
            <person name="Tallon L.J."/>
            <person name="Zaborsky J.M."/>
            <person name="Dunbar H.E."/>
            <person name="Tran P.L."/>
            <person name="Moran N.A."/>
            <person name="Eisen J.A."/>
        </authorList>
    </citation>
    <scope>NUCLEOTIDE SEQUENCE [LARGE SCALE GENOMIC DNA]</scope>
</reference>